<dbReference type="EMBL" id="CP001037">
    <property type="protein sequence ID" value="ACC82747.1"/>
    <property type="molecule type" value="Genomic_DNA"/>
</dbReference>
<dbReference type="RefSeq" id="WP_012410709.1">
    <property type="nucleotide sequence ID" value="NC_010628.1"/>
</dbReference>
<dbReference type="SMR" id="B2ITN9"/>
<dbReference type="STRING" id="63737.Npun_R4374"/>
<dbReference type="EnsemblBacteria" id="ACC82747">
    <property type="protein sequence ID" value="ACC82747"/>
    <property type="gene ID" value="Npun_R4374"/>
</dbReference>
<dbReference type="KEGG" id="npu:Npun_R4374"/>
<dbReference type="eggNOG" id="COG0098">
    <property type="taxonomic scope" value="Bacteria"/>
</dbReference>
<dbReference type="HOGENOM" id="CLU_065898_2_2_3"/>
<dbReference type="OrthoDB" id="9809045at2"/>
<dbReference type="PhylomeDB" id="B2ITN9"/>
<dbReference type="Proteomes" id="UP000001191">
    <property type="component" value="Chromosome"/>
</dbReference>
<dbReference type="GO" id="GO:0015935">
    <property type="term" value="C:small ribosomal subunit"/>
    <property type="evidence" value="ECO:0007669"/>
    <property type="project" value="InterPro"/>
</dbReference>
<dbReference type="GO" id="GO:0019843">
    <property type="term" value="F:rRNA binding"/>
    <property type="evidence" value="ECO:0007669"/>
    <property type="project" value="UniProtKB-UniRule"/>
</dbReference>
<dbReference type="GO" id="GO:0003735">
    <property type="term" value="F:structural constituent of ribosome"/>
    <property type="evidence" value="ECO:0007669"/>
    <property type="project" value="InterPro"/>
</dbReference>
<dbReference type="GO" id="GO:0006412">
    <property type="term" value="P:translation"/>
    <property type="evidence" value="ECO:0007669"/>
    <property type="project" value="UniProtKB-UniRule"/>
</dbReference>
<dbReference type="FunFam" id="3.30.230.10:FF:000002">
    <property type="entry name" value="30S ribosomal protein S5"/>
    <property type="match status" value="1"/>
</dbReference>
<dbReference type="Gene3D" id="3.30.160.20">
    <property type="match status" value="1"/>
</dbReference>
<dbReference type="Gene3D" id="3.30.230.10">
    <property type="match status" value="1"/>
</dbReference>
<dbReference type="HAMAP" id="MF_01307_B">
    <property type="entry name" value="Ribosomal_uS5_B"/>
    <property type="match status" value="1"/>
</dbReference>
<dbReference type="InterPro" id="IPR020568">
    <property type="entry name" value="Ribosomal_Su5_D2-typ_SF"/>
</dbReference>
<dbReference type="InterPro" id="IPR000851">
    <property type="entry name" value="Ribosomal_uS5"/>
</dbReference>
<dbReference type="InterPro" id="IPR005712">
    <property type="entry name" value="Ribosomal_uS5_bac-type"/>
</dbReference>
<dbReference type="InterPro" id="IPR005324">
    <property type="entry name" value="Ribosomal_uS5_C"/>
</dbReference>
<dbReference type="InterPro" id="IPR013810">
    <property type="entry name" value="Ribosomal_uS5_N"/>
</dbReference>
<dbReference type="InterPro" id="IPR018192">
    <property type="entry name" value="Ribosomal_uS5_N_CS"/>
</dbReference>
<dbReference type="InterPro" id="IPR014721">
    <property type="entry name" value="Ribsml_uS5_D2-typ_fold_subgr"/>
</dbReference>
<dbReference type="NCBIfam" id="TIGR01021">
    <property type="entry name" value="rpsE_bact"/>
    <property type="match status" value="1"/>
</dbReference>
<dbReference type="PANTHER" id="PTHR48277">
    <property type="entry name" value="MITOCHONDRIAL RIBOSOMAL PROTEIN S5"/>
    <property type="match status" value="1"/>
</dbReference>
<dbReference type="PANTHER" id="PTHR48277:SF1">
    <property type="entry name" value="MITOCHONDRIAL RIBOSOMAL PROTEIN S5"/>
    <property type="match status" value="1"/>
</dbReference>
<dbReference type="Pfam" id="PF00333">
    <property type="entry name" value="Ribosomal_S5"/>
    <property type="match status" value="1"/>
</dbReference>
<dbReference type="Pfam" id="PF03719">
    <property type="entry name" value="Ribosomal_S5_C"/>
    <property type="match status" value="1"/>
</dbReference>
<dbReference type="SUPFAM" id="SSF54768">
    <property type="entry name" value="dsRNA-binding domain-like"/>
    <property type="match status" value="1"/>
</dbReference>
<dbReference type="SUPFAM" id="SSF54211">
    <property type="entry name" value="Ribosomal protein S5 domain 2-like"/>
    <property type="match status" value="1"/>
</dbReference>
<dbReference type="PROSITE" id="PS00585">
    <property type="entry name" value="RIBOSOMAL_S5"/>
    <property type="match status" value="1"/>
</dbReference>
<dbReference type="PROSITE" id="PS50881">
    <property type="entry name" value="S5_DSRBD"/>
    <property type="match status" value="1"/>
</dbReference>
<gene>
    <name evidence="1" type="primary">rpsE</name>
    <name evidence="1" type="synonym">rps5</name>
    <name type="ordered locus">Npun_R4374</name>
</gene>
<proteinExistence type="inferred from homology"/>
<name>RS5_NOSP7</name>
<protein>
    <recommendedName>
        <fullName evidence="1">Small ribosomal subunit protein uS5</fullName>
    </recommendedName>
    <alternativeName>
        <fullName evidence="2">30S ribosomal protein S5</fullName>
    </alternativeName>
</protein>
<organism>
    <name type="scientific">Nostoc punctiforme (strain ATCC 29133 / PCC 73102)</name>
    <dbReference type="NCBI Taxonomy" id="63737"/>
    <lineage>
        <taxon>Bacteria</taxon>
        <taxon>Bacillati</taxon>
        <taxon>Cyanobacteriota</taxon>
        <taxon>Cyanophyceae</taxon>
        <taxon>Nostocales</taxon>
        <taxon>Nostocaceae</taxon>
        <taxon>Nostoc</taxon>
    </lineage>
</organism>
<accession>B2ITN9</accession>
<comment type="function">
    <text evidence="1">With S4 and S12 plays an important role in translational accuracy.</text>
</comment>
<comment type="function">
    <text evidence="1">Located at the back of the 30S subunit body where it stabilizes the conformation of the head with respect to the body.</text>
</comment>
<comment type="subunit">
    <text evidence="1">Part of the 30S ribosomal subunit. Contacts proteins S4 and S8.</text>
</comment>
<comment type="domain">
    <text>The N-terminal domain interacts with the head of the 30S subunit; the C-terminal domain interacts with the body and contacts protein S4. The interaction surface between S4 and S5 is involved in control of translational fidelity.</text>
</comment>
<comment type="similarity">
    <text evidence="1">Belongs to the universal ribosomal protein uS5 family.</text>
</comment>
<reference key="1">
    <citation type="journal article" date="2013" name="Plant Physiol.">
        <title>A Nostoc punctiforme Sugar Transporter Necessary to Establish a Cyanobacterium-Plant Symbiosis.</title>
        <authorList>
            <person name="Ekman M."/>
            <person name="Picossi S."/>
            <person name="Campbell E.L."/>
            <person name="Meeks J.C."/>
            <person name="Flores E."/>
        </authorList>
    </citation>
    <scope>NUCLEOTIDE SEQUENCE [LARGE SCALE GENOMIC DNA]</scope>
    <source>
        <strain>ATCC 29133 / PCC 73102</strain>
    </source>
</reference>
<evidence type="ECO:0000255" key="1">
    <source>
        <dbReference type="HAMAP-Rule" id="MF_01307"/>
    </source>
</evidence>
<evidence type="ECO:0000305" key="2"/>
<keyword id="KW-1185">Reference proteome</keyword>
<keyword id="KW-0687">Ribonucleoprotein</keyword>
<keyword id="KW-0689">Ribosomal protein</keyword>
<keyword id="KW-0694">RNA-binding</keyword>
<keyword id="KW-0699">rRNA-binding</keyword>
<feature type="chain" id="PRO_1000140875" description="Small ribosomal subunit protein uS5">
    <location>
        <begin position="1"/>
        <end position="175"/>
    </location>
</feature>
<feature type="domain" description="S5 DRBM" evidence="1">
    <location>
        <begin position="19"/>
        <end position="82"/>
    </location>
</feature>
<sequence>MATERKSRTKRAKKEETTWQERVIQIRRVSKVVKGGKKLSFRAIVVVGNERGQVGVGVGKASDVIGAVKKGVADGKKHLIDIPITKSNSIPHPIDGVGGGAKVIMRPAAPGTGVIAGGAVRTVLELAGVRNVLAKQLGSNNPLNNARAAVNALSTLRTLSEVAEDRGIPIQNLYI</sequence>